<accession>A1K3G9</accession>
<gene>
    <name evidence="1" type="primary">lolB</name>
    <name type="ordered locus">azo0757</name>
</gene>
<keyword id="KW-0998">Cell outer membrane</keyword>
<keyword id="KW-0143">Chaperone</keyword>
<keyword id="KW-0449">Lipoprotein</keyword>
<keyword id="KW-0472">Membrane</keyword>
<keyword id="KW-0564">Palmitate</keyword>
<keyword id="KW-0653">Protein transport</keyword>
<keyword id="KW-1185">Reference proteome</keyword>
<keyword id="KW-0732">Signal</keyword>
<keyword id="KW-0813">Transport</keyword>
<dbReference type="EMBL" id="AM406670">
    <property type="protein sequence ID" value="CAL93374.1"/>
    <property type="molecule type" value="Genomic_DNA"/>
</dbReference>
<dbReference type="RefSeq" id="WP_011764491.1">
    <property type="nucleotide sequence ID" value="NC_008702.1"/>
</dbReference>
<dbReference type="SMR" id="A1K3G9"/>
<dbReference type="STRING" id="62928.azo0757"/>
<dbReference type="KEGG" id="azo:azo0757"/>
<dbReference type="eggNOG" id="COG3017">
    <property type="taxonomic scope" value="Bacteria"/>
</dbReference>
<dbReference type="HOGENOM" id="CLU_092816_3_1_4"/>
<dbReference type="Proteomes" id="UP000002588">
    <property type="component" value="Chromosome"/>
</dbReference>
<dbReference type="GO" id="GO:0009279">
    <property type="term" value="C:cell outer membrane"/>
    <property type="evidence" value="ECO:0007669"/>
    <property type="project" value="UniProtKB-SubCell"/>
</dbReference>
<dbReference type="GO" id="GO:0044874">
    <property type="term" value="P:lipoprotein localization to outer membrane"/>
    <property type="evidence" value="ECO:0007669"/>
    <property type="project" value="UniProtKB-UniRule"/>
</dbReference>
<dbReference type="GO" id="GO:0015031">
    <property type="term" value="P:protein transport"/>
    <property type="evidence" value="ECO:0007669"/>
    <property type="project" value="UniProtKB-KW"/>
</dbReference>
<dbReference type="CDD" id="cd16326">
    <property type="entry name" value="LolB"/>
    <property type="match status" value="1"/>
</dbReference>
<dbReference type="Gene3D" id="2.50.20.10">
    <property type="entry name" value="Lipoprotein localisation LolA/LolB/LppX"/>
    <property type="match status" value="1"/>
</dbReference>
<dbReference type="HAMAP" id="MF_00233">
    <property type="entry name" value="LolB"/>
    <property type="match status" value="1"/>
</dbReference>
<dbReference type="InterPro" id="IPR029046">
    <property type="entry name" value="LolA/LolB/LppX"/>
</dbReference>
<dbReference type="InterPro" id="IPR004565">
    <property type="entry name" value="OM_lipoprot_LolB"/>
</dbReference>
<dbReference type="NCBIfam" id="TIGR00548">
    <property type="entry name" value="lolB"/>
    <property type="match status" value="1"/>
</dbReference>
<dbReference type="Pfam" id="PF03550">
    <property type="entry name" value="LolB"/>
    <property type="match status" value="1"/>
</dbReference>
<dbReference type="SUPFAM" id="SSF89392">
    <property type="entry name" value="Prokaryotic lipoproteins and lipoprotein localization factors"/>
    <property type="match status" value="1"/>
</dbReference>
<organism>
    <name type="scientific">Azoarcus sp. (strain BH72)</name>
    <dbReference type="NCBI Taxonomy" id="418699"/>
    <lineage>
        <taxon>Bacteria</taxon>
        <taxon>Pseudomonadati</taxon>
        <taxon>Pseudomonadota</taxon>
        <taxon>Betaproteobacteria</taxon>
        <taxon>Rhodocyclales</taxon>
        <taxon>Zoogloeaceae</taxon>
        <taxon>Azoarcus</taxon>
    </lineage>
</organism>
<name>LOLB_AZOSB</name>
<proteinExistence type="inferred from homology"/>
<sequence length="193" mass="20950">MRPARRFLAALACVAGALLSACATPTPRAERAVLREVSAQFFLGGRMSASDGNQGASGRIEWQHDTAGDEVTVYSPLGQIAARLISSPTGAELLTSDGQRYQAENAEALMPRVFGFGVPVSRLAHWVQAAPPPGAEVRELDAAGRPALVIDQGWRVDYLEYPDTRARTLPTRVEVSRGDARIRLIIDQWELLQ</sequence>
<reference key="1">
    <citation type="journal article" date="2006" name="Nat. Biotechnol.">
        <title>Complete genome of the mutualistic, N2-fixing grass endophyte Azoarcus sp. strain BH72.</title>
        <authorList>
            <person name="Krause A."/>
            <person name="Ramakumar A."/>
            <person name="Bartels D."/>
            <person name="Battistoni F."/>
            <person name="Bekel T."/>
            <person name="Boch J."/>
            <person name="Boehm M."/>
            <person name="Friedrich F."/>
            <person name="Hurek T."/>
            <person name="Krause L."/>
            <person name="Linke B."/>
            <person name="McHardy A.C."/>
            <person name="Sarkar A."/>
            <person name="Schneiker S."/>
            <person name="Syed A.A."/>
            <person name="Thauer R."/>
            <person name="Vorhoelter F.-J."/>
            <person name="Weidner S."/>
            <person name="Puehler A."/>
            <person name="Reinhold-Hurek B."/>
            <person name="Kaiser O."/>
            <person name="Goesmann A."/>
        </authorList>
    </citation>
    <scope>NUCLEOTIDE SEQUENCE [LARGE SCALE GENOMIC DNA]</scope>
    <source>
        <strain>BH72</strain>
    </source>
</reference>
<protein>
    <recommendedName>
        <fullName evidence="1">Outer-membrane lipoprotein LolB</fullName>
    </recommendedName>
</protein>
<evidence type="ECO:0000255" key="1">
    <source>
        <dbReference type="HAMAP-Rule" id="MF_00233"/>
    </source>
</evidence>
<feature type="signal peptide" evidence="1">
    <location>
        <begin position="1"/>
        <end position="21"/>
    </location>
</feature>
<feature type="chain" id="PRO_0000336597" description="Outer-membrane lipoprotein LolB">
    <location>
        <begin position="22"/>
        <end position="193"/>
    </location>
</feature>
<feature type="lipid moiety-binding region" description="N-palmitoyl cysteine" evidence="1">
    <location>
        <position position="22"/>
    </location>
</feature>
<feature type="lipid moiety-binding region" description="S-diacylglycerol cysteine" evidence="1">
    <location>
        <position position="22"/>
    </location>
</feature>
<comment type="function">
    <text evidence="1">Plays a critical role in the incorporation of lipoproteins in the outer membrane after they are released by the LolA protein.</text>
</comment>
<comment type="subunit">
    <text evidence="1">Monomer.</text>
</comment>
<comment type="subcellular location">
    <subcellularLocation>
        <location evidence="1">Cell outer membrane</location>
        <topology evidence="1">Lipid-anchor</topology>
    </subcellularLocation>
</comment>
<comment type="similarity">
    <text evidence="1">Belongs to the LolB family.</text>
</comment>